<sequence length="733" mass="81992">MRNILLCENMTKVQKEVRCDHCGTSQGSKSVFSGQKVFLGRKITDVLETITHRSIPSSLPIKICFVCTSTFMSSAALIEKVRETVDRVQEQPAKKTKVAEIEEPSTQESDKKAVKVPKKNTTLRQRSKSIAAFPPSFVNGANTNTEIEIISASPKKLDKTPKKQISRLFEDNLNDSVKLTPAKEVSSTKKAFLNLFGNGGNDAIEVLTESEEEEDSDKGPITINTNNFQCPECEFHAKFPKPYKEHLQKEHGLQRPRIYPCTLCIKTFGVLKTLKNHLRDTHSRTFESEAKTKAKESKEKEAKSGAKNKIDAKAKETNAVSQRKKPKEKKSKEKKTEIKCNVETKVVDEIDDQVNNKKGTDSEDADQTQATKIASFKALNESLMKKRMLENVIDSEYTFAINGSSASTPRADSNNFQCEICDCELMTAKQMQEHMKTVHSIDKPKVFKCHVCEKSLATKQSLKTHMTLHADGAEAPNSSKRKILQDEDEDVDILGTTQIENTAEKVEGPKKSQQSPTKAAKFTNRKILQEEDEVVEIVDAFKTDNTAEDDEGPAEEKIIRSRNNIQHQVDGGMIAPRSPAKKTKKTSHVDLSVSTTNGNSPAKSEKRKKQDKSEDTLPSSDVDIVEEINYNVRPHKKARLESIGDSTADESTLSCDRCGKFVKSRQRLDSHMEKKHAAKLQCTLCKEVYQNQMDYVAHFSNCGSEGGLPCGVANCKKVFTEANFLSSHLRKRH</sequence>
<evidence type="ECO:0000255" key="1">
    <source>
        <dbReference type="PROSITE-ProRule" id="PRU00042"/>
    </source>
</evidence>
<evidence type="ECO:0000255" key="2">
    <source>
        <dbReference type="PROSITE-ProRule" id="PRU01263"/>
    </source>
</evidence>
<evidence type="ECO:0000256" key="3">
    <source>
        <dbReference type="SAM" id="MobiDB-lite"/>
    </source>
</evidence>
<evidence type="ECO:0000269" key="4">
    <source>
    </source>
</evidence>
<evidence type="ECO:0000269" key="5">
    <source>
    </source>
</evidence>
<evidence type="ECO:0000269" key="6">
    <source>
    </source>
</evidence>
<evidence type="ECO:0000303" key="7">
    <source>
    </source>
</evidence>
<evidence type="ECO:0000303" key="8">
    <source ref="3"/>
</evidence>
<evidence type="ECO:0000305" key="9"/>
<evidence type="ECO:0000312" key="10">
    <source>
        <dbReference type="FlyBase" id="FBgn0035213"/>
    </source>
</evidence>
<accession>Q8IRH5</accession>
<accession>A9UNC2</accession>
<accession>H0RNL4</accession>
<accession>M9PBH8</accession>
<accession>Q29R03</accession>
<accession>Q6NNC3</accession>
<accession>Q960W3</accession>
<accession>Q9W0G3</accession>
<feature type="chain" id="PRO_0000372842" description="Zinc finger protein indra">
    <location>
        <begin position="1"/>
        <end position="733"/>
    </location>
</feature>
<feature type="domain" description="ZAD" evidence="2">
    <location>
        <begin position="17"/>
        <end position="91"/>
    </location>
</feature>
<feature type="zinc finger region" description="C2H2-type 1" evidence="1">
    <location>
        <begin position="228"/>
        <end position="251"/>
    </location>
</feature>
<feature type="zinc finger region" description="C2H2-type 2" evidence="1">
    <location>
        <begin position="259"/>
        <end position="282"/>
    </location>
</feature>
<feature type="zinc finger region" description="C2H2-type 3" evidence="1">
    <location>
        <begin position="416"/>
        <end position="439"/>
    </location>
</feature>
<feature type="zinc finger region" description="C2H2-type 4" evidence="1">
    <location>
        <begin position="447"/>
        <end position="469"/>
    </location>
</feature>
<feature type="zinc finger region" description="C2H2-type 5" evidence="1">
    <location>
        <begin position="653"/>
        <end position="676"/>
    </location>
</feature>
<feature type="zinc finger region" description="C2H2-type 6" evidence="1">
    <location>
        <begin position="708"/>
        <end position="733"/>
    </location>
</feature>
<feature type="region of interest" description="Disordered" evidence="3">
    <location>
        <begin position="90"/>
        <end position="121"/>
    </location>
</feature>
<feature type="region of interest" description="Disordered" evidence="3">
    <location>
        <begin position="285"/>
        <end position="336"/>
    </location>
</feature>
<feature type="region of interest" description="Disordered" evidence="3">
    <location>
        <begin position="499"/>
        <end position="525"/>
    </location>
</feature>
<feature type="region of interest" description="Disordered" evidence="3">
    <location>
        <begin position="540"/>
        <end position="622"/>
    </location>
</feature>
<feature type="compositionally biased region" description="Basic and acidic residues" evidence="3">
    <location>
        <begin position="90"/>
        <end position="100"/>
    </location>
</feature>
<feature type="compositionally biased region" description="Basic and acidic residues" evidence="3">
    <location>
        <begin position="285"/>
        <end position="316"/>
    </location>
</feature>
<feature type="compositionally biased region" description="Polar residues" evidence="3">
    <location>
        <begin position="592"/>
        <end position="602"/>
    </location>
</feature>
<feature type="binding site" evidence="2">
    <location>
        <position position="19"/>
    </location>
    <ligand>
        <name>Zn(2+)</name>
        <dbReference type="ChEBI" id="CHEBI:29105"/>
    </ligand>
</feature>
<feature type="binding site" evidence="2">
    <location>
        <position position="22"/>
    </location>
    <ligand>
        <name>Zn(2+)</name>
        <dbReference type="ChEBI" id="CHEBI:29105"/>
    </ligand>
</feature>
<feature type="binding site" evidence="2">
    <location>
        <position position="64"/>
    </location>
    <ligand>
        <name>Zn(2+)</name>
        <dbReference type="ChEBI" id="CHEBI:29105"/>
    </ligand>
</feature>
<feature type="binding site" evidence="2">
    <location>
        <position position="67"/>
    </location>
    <ligand>
        <name>Zn(2+)</name>
        <dbReference type="ChEBI" id="CHEBI:29105"/>
    </ligand>
</feature>
<feature type="modified residue" description="Phosphoserine" evidence="4 5">
    <location>
        <position position="109"/>
    </location>
</feature>
<feature type="modified residue" description="Phosphoserine" evidence="5">
    <location>
        <position position="153"/>
    </location>
</feature>
<feature type="modified residue" description="Phosphoserine" evidence="5">
    <location>
        <position position="176"/>
    </location>
</feature>
<feature type="modified residue" description="Phosphothreonine" evidence="5">
    <location>
        <position position="180"/>
    </location>
</feature>
<feature type="modified residue" description="Phosphothreonine" evidence="5">
    <location>
        <position position="188"/>
    </location>
</feature>
<feature type="modified residue" description="Phosphoserine" evidence="5">
    <location>
        <position position="600"/>
    </location>
</feature>
<feature type="modified residue" description="Phosphoserine" evidence="5">
    <location>
        <position position="642"/>
    </location>
</feature>
<feature type="modified residue" description="Phosphoserine" evidence="5">
    <location>
        <position position="646"/>
    </location>
</feature>
<feature type="modified residue" description="Phosphothreonine" evidence="5">
    <location>
        <position position="647"/>
    </location>
</feature>
<feature type="modified residue" description="Phosphoserine" evidence="5">
    <location>
        <position position="654"/>
    </location>
</feature>
<feature type="splice variant" id="VSP_037203" description="In isoform A." evidence="8">
    <location>
        <begin position="1"/>
        <end position="9"/>
    </location>
</feature>
<protein>
    <recommendedName>
        <fullName evidence="7">Zinc finger protein indra</fullName>
    </recommendedName>
</protein>
<gene>
    <name evidence="7 10" type="primary">indra</name>
    <name evidence="10" type="ORF">CG2199</name>
</gene>
<proteinExistence type="evidence at protein level"/>
<name>INDRA_DROME</name>
<reference key="1">
    <citation type="journal article" date="2000" name="Science">
        <title>The genome sequence of Drosophila melanogaster.</title>
        <authorList>
            <person name="Adams M.D."/>
            <person name="Celniker S.E."/>
            <person name="Holt R.A."/>
            <person name="Evans C.A."/>
            <person name="Gocayne J.D."/>
            <person name="Amanatides P.G."/>
            <person name="Scherer S.E."/>
            <person name="Li P.W."/>
            <person name="Hoskins R.A."/>
            <person name="Galle R.F."/>
            <person name="George R.A."/>
            <person name="Lewis S.E."/>
            <person name="Richards S."/>
            <person name="Ashburner M."/>
            <person name="Henderson S.N."/>
            <person name="Sutton G.G."/>
            <person name="Wortman J.R."/>
            <person name="Yandell M.D."/>
            <person name="Zhang Q."/>
            <person name="Chen L.X."/>
            <person name="Brandon R.C."/>
            <person name="Rogers Y.-H.C."/>
            <person name="Blazej R.G."/>
            <person name="Champe M."/>
            <person name="Pfeiffer B.D."/>
            <person name="Wan K.H."/>
            <person name="Doyle C."/>
            <person name="Baxter E.G."/>
            <person name="Helt G."/>
            <person name="Nelson C.R."/>
            <person name="Miklos G.L.G."/>
            <person name="Abril J.F."/>
            <person name="Agbayani A."/>
            <person name="An H.-J."/>
            <person name="Andrews-Pfannkoch C."/>
            <person name="Baldwin D."/>
            <person name="Ballew R.M."/>
            <person name="Basu A."/>
            <person name="Baxendale J."/>
            <person name="Bayraktaroglu L."/>
            <person name="Beasley E.M."/>
            <person name="Beeson K.Y."/>
            <person name="Benos P.V."/>
            <person name="Berman B.P."/>
            <person name="Bhandari D."/>
            <person name="Bolshakov S."/>
            <person name="Borkova D."/>
            <person name="Botchan M.R."/>
            <person name="Bouck J."/>
            <person name="Brokstein P."/>
            <person name="Brottier P."/>
            <person name="Burtis K.C."/>
            <person name="Busam D.A."/>
            <person name="Butler H."/>
            <person name="Cadieu E."/>
            <person name="Center A."/>
            <person name="Chandra I."/>
            <person name="Cherry J.M."/>
            <person name="Cawley S."/>
            <person name="Dahlke C."/>
            <person name="Davenport L.B."/>
            <person name="Davies P."/>
            <person name="de Pablos B."/>
            <person name="Delcher A."/>
            <person name="Deng Z."/>
            <person name="Mays A.D."/>
            <person name="Dew I."/>
            <person name="Dietz S.M."/>
            <person name="Dodson K."/>
            <person name="Doup L.E."/>
            <person name="Downes M."/>
            <person name="Dugan-Rocha S."/>
            <person name="Dunkov B.C."/>
            <person name="Dunn P."/>
            <person name="Durbin K.J."/>
            <person name="Evangelista C.C."/>
            <person name="Ferraz C."/>
            <person name="Ferriera S."/>
            <person name="Fleischmann W."/>
            <person name="Fosler C."/>
            <person name="Gabrielian A.E."/>
            <person name="Garg N.S."/>
            <person name="Gelbart W.M."/>
            <person name="Glasser K."/>
            <person name="Glodek A."/>
            <person name="Gong F."/>
            <person name="Gorrell J.H."/>
            <person name="Gu Z."/>
            <person name="Guan P."/>
            <person name="Harris M."/>
            <person name="Harris N.L."/>
            <person name="Harvey D.A."/>
            <person name="Heiman T.J."/>
            <person name="Hernandez J.R."/>
            <person name="Houck J."/>
            <person name="Hostin D."/>
            <person name="Houston K.A."/>
            <person name="Howland T.J."/>
            <person name="Wei M.-H."/>
            <person name="Ibegwam C."/>
            <person name="Jalali M."/>
            <person name="Kalush F."/>
            <person name="Karpen G.H."/>
            <person name="Ke Z."/>
            <person name="Kennison J.A."/>
            <person name="Ketchum K.A."/>
            <person name="Kimmel B.E."/>
            <person name="Kodira C.D."/>
            <person name="Kraft C.L."/>
            <person name="Kravitz S."/>
            <person name="Kulp D."/>
            <person name="Lai Z."/>
            <person name="Lasko P."/>
            <person name="Lei Y."/>
            <person name="Levitsky A.A."/>
            <person name="Li J.H."/>
            <person name="Li Z."/>
            <person name="Liang Y."/>
            <person name="Lin X."/>
            <person name="Liu X."/>
            <person name="Mattei B."/>
            <person name="McIntosh T.C."/>
            <person name="McLeod M.P."/>
            <person name="McPherson D."/>
            <person name="Merkulov G."/>
            <person name="Milshina N.V."/>
            <person name="Mobarry C."/>
            <person name="Morris J."/>
            <person name="Moshrefi A."/>
            <person name="Mount S.M."/>
            <person name="Moy M."/>
            <person name="Murphy B."/>
            <person name="Murphy L."/>
            <person name="Muzny D.M."/>
            <person name="Nelson D.L."/>
            <person name="Nelson D.R."/>
            <person name="Nelson K.A."/>
            <person name="Nixon K."/>
            <person name="Nusskern D.R."/>
            <person name="Pacleb J.M."/>
            <person name="Palazzolo M."/>
            <person name="Pittman G.S."/>
            <person name="Pan S."/>
            <person name="Pollard J."/>
            <person name="Puri V."/>
            <person name="Reese M.G."/>
            <person name="Reinert K."/>
            <person name="Remington K."/>
            <person name="Saunders R.D.C."/>
            <person name="Scheeler F."/>
            <person name="Shen H."/>
            <person name="Shue B.C."/>
            <person name="Siden-Kiamos I."/>
            <person name="Simpson M."/>
            <person name="Skupski M.P."/>
            <person name="Smith T.J."/>
            <person name="Spier E."/>
            <person name="Spradling A.C."/>
            <person name="Stapleton M."/>
            <person name="Strong R."/>
            <person name="Sun E."/>
            <person name="Svirskas R."/>
            <person name="Tector C."/>
            <person name="Turner R."/>
            <person name="Venter E."/>
            <person name="Wang A.H."/>
            <person name="Wang X."/>
            <person name="Wang Z.-Y."/>
            <person name="Wassarman D.A."/>
            <person name="Weinstock G.M."/>
            <person name="Weissenbach J."/>
            <person name="Williams S.M."/>
            <person name="Woodage T."/>
            <person name="Worley K.C."/>
            <person name="Wu D."/>
            <person name="Yang S."/>
            <person name="Yao Q.A."/>
            <person name="Ye J."/>
            <person name="Yeh R.-F."/>
            <person name="Zaveri J.S."/>
            <person name="Zhan M."/>
            <person name="Zhang G."/>
            <person name="Zhao Q."/>
            <person name="Zheng L."/>
            <person name="Zheng X.H."/>
            <person name="Zhong F.N."/>
            <person name="Zhong W."/>
            <person name="Zhou X."/>
            <person name="Zhu S.C."/>
            <person name="Zhu X."/>
            <person name="Smith H.O."/>
            <person name="Gibbs R.A."/>
            <person name="Myers E.W."/>
            <person name="Rubin G.M."/>
            <person name="Venter J.C."/>
        </authorList>
    </citation>
    <scope>NUCLEOTIDE SEQUENCE [LARGE SCALE GENOMIC DNA]</scope>
    <source>
        <strain>Berkeley</strain>
    </source>
</reference>
<reference key="2">
    <citation type="journal article" date="2002" name="Genome Biol.">
        <title>Annotation of the Drosophila melanogaster euchromatic genome: a systematic review.</title>
        <authorList>
            <person name="Misra S."/>
            <person name="Crosby M.A."/>
            <person name="Mungall C.J."/>
            <person name="Matthews B.B."/>
            <person name="Campbell K.S."/>
            <person name="Hradecky P."/>
            <person name="Huang Y."/>
            <person name="Kaminker J.S."/>
            <person name="Millburn G.H."/>
            <person name="Prochnik S.E."/>
            <person name="Smith C.D."/>
            <person name="Tupy J.L."/>
            <person name="Whitfield E.J."/>
            <person name="Bayraktaroglu L."/>
            <person name="Berman B.P."/>
            <person name="Bettencourt B.R."/>
            <person name="Celniker S.E."/>
            <person name="de Grey A.D.N.J."/>
            <person name="Drysdale R.A."/>
            <person name="Harris N.L."/>
            <person name="Richter J."/>
            <person name="Russo S."/>
            <person name="Schroeder A.J."/>
            <person name="Shu S.Q."/>
            <person name="Stapleton M."/>
            <person name="Yamada C."/>
            <person name="Ashburner M."/>
            <person name="Gelbart W.M."/>
            <person name="Rubin G.M."/>
            <person name="Lewis S.E."/>
        </authorList>
    </citation>
    <scope>GENOME REANNOTATION</scope>
    <scope>ALTERNATIVE SPLICING</scope>
    <source>
        <strain>Berkeley</strain>
    </source>
</reference>
<reference key="3">
    <citation type="submission" date="2006-01" db="EMBL/GenBank/DDBJ databases">
        <authorList>
            <person name="Stapleton M."/>
            <person name="Carlson J.W."/>
            <person name="Chavez C."/>
            <person name="Frise E."/>
            <person name="George R.A."/>
            <person name="Pacleb J.M."/>
            <person name="Park S."/>
            <person name="Wan K.H."/>
            <person name="Yu C."/>
            <person name="Celniker S.E."/>
        </authorList>
    </citation>
    <scope>NUCLEOTIDE SEQUENCE [LARGE SCALE MRNA] (ISOFORMS A AND B)</scope>
    <source>
        <strain>Berkeley</strain>
        <tissue>Embryo</tissue>
    </source>
</reference>
<reference key="4">
    <citation type="submission" date="2011-12" db="EMBL/GenBank/DDBJ databases">
        <authorList>
            <person name="Carlson J."/>
            <person name="Booth B."/>
            <person name="Frise E."/>
            <person name="Park S."/>
            <person name="Wan K."/>
            <person name="Yu C."/>
            <person name="Celniker S."/>
        </authorList>
    </citation>
    <scope>NUCLEOTIDE SEQUENCE [LARGE SCALE MRNA]</scope>
</reference>
<reference key="5">
    <citation type="journal article" date="2002" name="Genome Biol.">
        <title>A Drosophila full-length cDNA resource.</title>
        <authorList>
            <person name="Stapleton M."/>
            <person name="Carlson J.W."/>
            <person name="Brokstein P."/>
            <person name="Yu C."/>
            <person name="Champe M."/>
            <person name="George R.A."/>
            <person name="Guarin H."/>
            <person name="Kronmiller B."/>
            <person name="Pacleb J.M."/>
            <person name="Park S."/>
            <person name="Wan K.H."/>
            <person name="Rubin G.M."/>
            <person name="Celniker S.E."/>
        </authorList>
    </citation>
    <scope>NUCLEOTIDE SEQUENCE [LARGE SCALE MRNA] OF 338-733</scope>
    <source>
        <strain>Berkeley</strain>
        <tissue>Embryo</tissue>
    </source>
</reference>
<reference key="6">
    <citation type="journal article" date="2007" name="Mol. Biosyst.">
        <title>An integrated chemical, mass spectrometric and computational strategy for (quantitative) phosphoproteomics: application to Drosophila melanogaster Kc167 cells.</title>
        <authorList>
            <person name="Bodenmiller B."/>
            <person name="Mueller L.N."/>
            <person name="Pedrioli P.G.A."/>
            <person name="Pflieger D."/>
            <person name="Juenger M.A."/>
            <person name="Eng J.K."/>
            <person name="Aebersold R."/>
            <person name="Tao W.A."/>
        </authorList>
    </citation>
    <scope>PHOSPHORYLATION [LARGE SCALE ANALYSIS] AT SER-109</scope>
    <scope>IDENTIFICATION BY MASS SPECTROMETRY</scope>
</reference>
<reference key="7">
    <citation type="journal article" date="2008" name="J. Proteome Res.">
        <title>Phosphoproteome analysis of Drosophila melanogaster embryos.</title>
        <authorList>
            <person name="Zhai B."/>
            <person name="Villen J."/>
            <person name="Beausoleil S.A."/>
            <person name="Mintseris J."/>
            <person name="Gygi S.P."/>
        </authorList>
    </citation>
    <scope>PHOSPHORYLATION [LARGE SCALE ANALYSIS] AT SER-109; SER-153; SER-176; THR-180; THR-188; SER-600; SER-642; SER-646; THR-647 AND SER-654</scope>
    <scope>IDENTIFICATION BY MASS SPECTROMETRY</scope>
    <source>
        <tissue>Embryo</tissue>
    </source>
</reference>
<reference key="8">
    <citation type="journal article" date="2022" name="Sci. Adv.">
        <title>Nonrandom sister chromatid segregation mediates rDNA copy number maintenance in Drosophila.</title>
        <authorList>
            <person name="Watase G.J."/>
            <person name="Nelson J.O."/>
            <person name="Yamashita Y.M."/>
        </authorList>
    </citation>
    <scope>FUNCTION</scope>
    <scope>SUBCELLULAR LOCATION</scope>
    <scope>DISRUPTION PHENOTYPE</scope>
</reference>
<comment type="function">
    <text evidence="6 9">Required for rDNA copy number maintenance and non-random sister chromatid segregation (NRSS) following unequal sister chromatid exchange (PubMed:35895823). Binds ribosomal DNA (rDNA) preferentially binding to intergenic spacers (IGS) regions on both X and Y chromosomes (PubMed:35895823). Essential for NRSS, a mechanism which contributes to the recovery and maintenance of inherently unstable rDNA copy numbers so that the integrity of the germline genome is upheld over generations and germline immortality is sustained (PubMed:35895823). May be involved in transcriptional regulation (Probable).</text>
</comment>
<comment type="subcellular location">
    <subcellularLocation>
        <location evidence="6">Nucleus</location>
    </subcellularLocation>
    <subcellularLocation>
        <location evidence="6">Nucleus</location>
        <location evidence="6">Nucleolus</location>
    </subcellularLocation>
    <text evidence="6">Localizes to the nucleolus (the site of rDNA transcription) during interphase and rDNA loci during metaphase.</text>
</comment>
<comment type="alternative products">
    <event type="alternative splicing"/>
    <isoform>
        <id>Q8IRH5-1</id>
        <name evidence="10">B</name>
        <sequence type="displayed"/>
    </isoform>
    <isoform>
        <id>Q8IRH5-2</id>
        <name evidence="10">A</name>
        <name evidence="10">C</name>
        <sequence type="described" ref="VSP_037203"/>
    </isoform>
</comment>
<comment type="disruption phenotype">
    <text evidence="6">RNAi-mediated knockdown produces various phenotypes that are the result of reduced rDNA copy number (PubMed:35895823). These include a decreased number of progeny, a progressive loss of fecundity over successive generations, and a number of offspring from male knockdown mutants, exhibit a bobbed phenotype (abnormal cuticle patterns on the abdomen) which is characteristic of decreased rDNA copy number (PubMed:35895823). In addition, the offspring of knockdown mutants display reduced rDNA magnification, a process by which an X chromosome with insufficient rDNA copy number is induced to recover copy number (PubMed:35895823). RNAi-mediated knockdown in the germ line decreases the frequency of non-random sister chromatid segregation (NRSS) for both the X and Y chromosomes (PubMed:35895823).</text>
</comment>
<comment type="miscellaneous">
    <text evidence="7">Named after the Hindu god Indra who lost immortality due to a curse from Durvasa, likely referring to mutants displaying a loss of germline immortality.</text>
</comment>
<comment type="similarity">
    <text evidence="9">Belongs to the krueppel C2H2-type zinc-finger protein family.</text>
</comment>
<comment type="sequence caution" evidence="9">
    <conflict type="erroneous initiation">
        <sequence resource="EMBL-CDS" id="AAK93233"/>
    </conflict>
    <text>Truncated N-terminus.</text>
</comment>
<comment type="sequence caution" evidence="9">
    <conflict type="miscellaneous discrepancy">
        <sequence resource="EMBL-CDS" id="AAR96159"/>
    </conflict>
    <text>Contaminating sequence. Potential poly-A sequence.</text>
</comment>
<comment type="sequence caution" evidence="9">
    <conflict type="erroneous initiation">
        <sequence resource="EMBL-CDS" id="ABC86299"/>
    </conflict>
    <text>Extended N-terminus.</text>
</comment>
<comment type="sequence caution" evidence="9">
    <conflict type="frameshift">
        <sequence resource="EMBL-CDS" id="ABY20527"/>
    </conflict>
</comment>
<comment type="sequence caution" evidence="9">
    <conflict type="erroneous initiation">
        <sequence resource="EMBL-CDS" id="AEW12908"/>
    </conflict>
    <text>Extended N-terminus.</text>
</comment>
<organism>
    <name type="scientific">Drosophila melanogaster</name>
    <name type="common">Fruit fly</name>
    <dbReference type="NCBI Taxonomy" id="7227"/>
    <lineage>
        <taxon>Eukaryota</taxon>
        <taxon>Metazoa</taxon>
        <taxon>Ecdysozoa</taxon>
        <taxon>Arthropoda</taxon>
        <taxon>Hexapoda</taxon>
        <taxon>Insecta</taxon>
        <taxon>Pterygota</taxon>
        <taxon>Neoptera</taxon>
        <taxon>Endopterygota</taxon>
        <taxon>Diptera</taxon>
        <taxon>Brachycera</taxon>
        <taxon>Muscomorpha</taxon>
        <taxon>Ephydroidea</taxon>
        <taxon>Drosophilidae</taxon>
        <taxon>Drosophila</taxon>
        <taxon>Sophophora</taxon>
    </lineage>
</organism>
<dbReference type="EMBL" id="AE014296">
    <property type="protein sequence ID" value="AAF47485.1"/>
    <property type="molecule type" value="Genomic_DNA"/>
</dbReference>
<dbReference type="EMBL" id="AE014296">
    <property type="protein sequence ID" value="AAN11474.1"/>
    <property type="molecule type" value="Genomic_DNA"/>
</dbReference>
<dbReference type="EMBL" id="AE014296">
    <property type="protein sequence ID" value="AGB93947.1"/>
    <property type="molecule type" value="Genomic_DNA"/>
</dbReference>
<dbReference type="EMBL" id="BT011367">
    <property type="protein sequence ID" value="AAR96159.1"/>
    <property type="status" value="ALT_SEQ"/>
    <property type="molecule type" value="mRNA"/>
</dbReference>
<dbReference type="EMBL" id="BT024237">
    <property type="protein sequence ID" value="ABC86299.1"/>
    <property type="status" value="ALT_INIT"/>
    <property type="molecule type" value="mRNA"/>
</dbReference>
<dbReference type="EMBL" id="BT031286">
    <property type="protein sequence ID" value="ABY20527.1"/>
    <property type="status" value="ALT_FRAME"/>
    <property type="molecule type" value="mRNA"/>
</dbReference>
<dbReference type="EMBL" id="BT132936">
    <property type="protein sequence ID" value="AEW12908.1"/>
    <property type="status" value="ALT_INIT"/>
    <property type="molecule type" value="mRNA"/>
</dbReference>
<dbReference type="EMBL" id="AY051809">
    <property type="protein sequence ID" value="AAK93233.1"/>
    <property type="status" value="ALT_INIT"/>
    <property type="molecule type" value="mRNA"/>
</dbReference>
<dbReference type="RefSeq" id="NP_001261252.1">
    <molecule id="Q8IRH5-2"/>
    <property type="nucleotide sequence ID" value="NM_001274323.1"/>
</dbReference>
<dbReference type="RefSeq" id="NP_612104.1">
    <molecule id="Q8IRH5-2"/>
    <property type="nucleotide sequence ID" value="NM_138260.5"/>
</dbReference>
<dbReference type="RefSeq" id="NP_728599.1">
    <molecule id="Q8IRH5-1"/>
    <property type="nucleotide sequence ID" value="NM_167873.2"/>
</dbReference>
<dbReference type="BioGRID" id="63701">
    <property type="interactions" value="84"/>
</dbReference>
<dbReference type="FunCoup" id="Q8IRH5">
    <property type="interactions" value="472"/>
</dbReference>
<dbReference type="IntAct" id="Q8IRH5">
    <property type="interactions" value="54"/>
</dbReference>
<dbReference type="STRING" id="7227.FBpp0072605"/>
<dbReference type="iPTMnet" id="Q8IRH5"/>
<dbReference type="PaxDb" id="7227-FBpp0072605"/>
<dbReference type="DNASU" id="38159"/>
<dbReference type="EnsemblMetazoa" id="FBtr0072721">
    <molecule id="Q8IRH5-1"/>
    <property type="protein sequence ID" value="FBpp0072605"/>
    <property type="gene ID" value="FBgn0035213"/>
</dbReference>
<dbReference type="EnsemblMetazoa" id="FBtr0072722">
    <molecule id="Q8IRH5-2"/>
    <property type="protein sequence ID" value="FBpp0072606"/>
    <property type="gene ID" value="FBgn0035213"/>
</dbReference>
<dbReference type="EnsemblMetazoa" id="FBtr0331865">
    <molecule id="Q8IRH5-2"/>
    <property type="protein sequence ID" value="FBpp0304249"/>
    <property type="gene ID" value="FBgn0035213"/>
</dbReference>
<dbReference type="GeneID" id="38159"/>
<dbReference type="KEGG" id="dme:Dmel_CG2199"/>
<dbReference type="UCSC" id="CG2199-RA">
    <property type="organism name" value="d. melanogaster"/>
</dbReference>
<dbReference type="UCSC" id="CG2199-RB">
    <molecule id="Q8IRH5-1"/>
    <property type="organism name" value="d. melanogaster"/>
</dbReference>
<dbReference type="AGR" id="FB:FBgn0035213"/>
<dbReference type="CTD" id="38159"/>
<dbReference type="FlyBase" id="FBgn0035213">
    <property type="gene designation" value="indra"/>
</dbReference>
<dbReference type="VEuPathDB" id="VectorBase:FBgn0035213"/>
<dbReference type="eggNOG" id="KOG1721">
    <property type="taxonomic scope" value="Eukaryota"/>
</dbReference>
<dbReference type="GeneTree" id="ENSGT00940000166443"/>
<dbReference type="HOGENOM" id="CLU_365354_0_0_1"/>
<dbReference type="InParanoid" id="Q8IRH5"/>
<dbReference type="OMA" id="HGQQRPR"/>
<dbReference type="OrthoDB" id="6077919at2759"/>
<dbReference type="PhylomeDB" id="Q8IRH5"/>
<dbReference type="BioGRID-ORCS" id="38159">
    <property type="hits" value="0 hits in 1 CRISPR screen"/>
</dbReference>
<dbReference type="GenomeRNAi" id="38159"/>
<dbReference type="PRO" id="PR:Q8IRH5"/>
<dbReference type="Proteomes" id="UP000000803">
    <property type="component" value="Chromosome 3L"/>
</dbReference>
<dbReference type="Bgee" id="FBgn0035213">
    <property type="expression patterns" value="Expressed in egg cell and 154 other cell types or tissues"/>
</dbReference>
<dbReference type="ExpressionAtlas" id="Q8IRH5">
    <property type="expression patterns" value="baseline and differential"/>
</dbReference>
<dbReference type="GO" id="GO:0005730">
    <property type="term" value="C:nucleolus"/>
    <property type="evidence" value="ECO:0000314"/>
    <property type="project" value="FlyBase"/>
</dbReference>
<dbReference type="GO" id="GO:0005634">
    <property type="term" value="C:nucleus"/>
    <property type="evidence" value="ECO:0000250"/>
    <property type="project" value="FlyBase"/>
</dbReference>
<dbReference type="GO" id="GO:0000981">
    <property type="term" value="F:DNA-binding transcription factor activity, RNA polymerase II-specific"/>
    <property type="evidence" value="ECO:0000250"/>
    <property type="project" value="FlyBase"/>
</dbReference>
<dbReference type="GO" id="GO:0000182">
    <property type="term" value="F:rDNA binding"/>
    <property type="evidence" value="ECO:0000314"/>
    <property type="project" value="FlyBase"/>
</dbReference>
<dbReference type="GO" id="GO:0000978">
    <property type="term" value="F:RNA polymerase II cis-regulatory region sequence-specific DNA binding"/>
    <property type="evidence" value="ECO:0000250"/>
    <property type="project" value="FlyBase"/>
</dbReference>
<dbReference type="GO" id="GO:0000977">
    <property type="term" value="F:RNA polymerase II transcription regulatory region sequence-specific DNA binding"/>
    <property type="evidence" value="ECO:0000318"/>
    <property type="project" value="GO_Central"/>
</dbReference>
<dbReference type="GO" id="GO:0008270">
    <property type="term" value="F:zinc ion binding"/>
    <property type="evidence" value="ECO:0007669"/>
    <property type="project" value="UniProtKB-KW"/>
</dbReference>
<dbReference type="GO" id="GO:0043007">
    <property type="term" value="P:maintenance of rDNA"/>
    <property type="evidence" value="ECO:0000315"/>
    <property type="project" value="FlyBase"/>
</dbReference>
<dbReference type="GO" id="GO:0000122">
    <property type="term" value="P:negative regulation of transcription by RNA polymerase II"/>
    <property type="evidence" value="ECO:0000250"/>
    <property type="project" value="FlyBase"/>
</dbReference>
<dbReference type="GO" id="GO:0045944">
    <property type="term" value="P:positive regulation of transcription by RNA polymerase II"/>
    <property type="evidence" value="ECO:0000250"/>
    <property type="project" value="FlyBase"/>
</dbReference>
<dbReference type="GO" id="GO:0006357">
    <property type="term" value="P:regulation of transcription by RNA polymerase II"/>
    <property type="evidence" value="ECO:0000318"/>
    <property type="project" value="GO_Central"/>
</dbReference>
<dbReference type="FunFam" id="3.30.160.60:FF:000446">
    <property type="entry name" value="Zinc finger protein"/>
    <property type="match status" value="1"/>
</dbReference>
<dbReference type="Gene3D" id="3.30.160.60">
    <property type="entry name" value="Classic Zinc Finger"/>
    <property type="match status" value="3"/>
</dbReference>
<dbReference type="InterPro" id="IPR012934">
    <property type="entry name" value="Znf_AD"/>
</dbReference>
<dbReference type="InterPro" id="IPR036236">
    <property type="entry name" value="Znf_C2H2_sf"/>
</dbReference>
<dbReference type="InterPro" id="IPR013087">
    <property type="entry name" value="Znf_C2H2_type"/>
</dbReference>
<dbReference type="PANTHER" id="PTHR24409">
    <property type="entry name" value="ZINC FINGER PROTEIN 142"/>
    <property type="match status" value="1"/>
</dbReference>
<dbReference type="PANTHER" id="PTHR24409:SF424">
    <property type="entry name" value="ZINC FINGER PROTEIN INDRA"/>
    <property type="match status" value="1"/>
</dbReference>
<dbReference type="Pfam" id="PF00096">
    <property type="entry name" value="zf-C2H2"/>
    <property type="match status" value="1"/>
</dbReference>
<dbReference type="SMART" id="SM00355">
    <property type="entry name" value="ZnF_C2H2"/>
    <property type="match status" value="7"/>
</dbReference>
<dbReference type="SUPFAM" id="SSF57667">
    <property type="entry name" value="beta-beta-alpha zinc fingers"/>
    <property type="match status" value="1"/>
</dbReference>
<dbReference type="PROSITE" id="PS51915">
    <property type="entry name" value="ZAD"/>
    <property type="match status" value="1"/>
</dbReference>
<dbReference type="PROSITE" id="PS00028">
    <property type="entry name" value="ZINC_FINGER_C2H2_1"/>
    <property type="match status" value="5"/>
</dbReference>
<dbReference type="PROSITE" id="PS50157">
    <property type="entry name" value="ZINC_FINGER_C2H2_2"/>
    <property type="match status" value="5"/>
</dbReference>
<keyword id="KW-0025">Alternative splicing</keyword>
<keyword id="KW-0238">DNA-binding</keyword>
<keyword id="KW-0479">Metal-binding</keyword>
<keyword id="KW-0539">Nucleus</keyword>
<keyword id="KW-0597">Phosphoprotein</keyword>
<keyword id="KW-1185">Reference proteome</keyword>
<keyword id="KW-0677">Repeat</keyword>
<keyword id="KW-0804">Transcription</keyword>
<keyword id="KW-0805">Transcription regulation</keyword>
<keyword id="KW-0862">Zinc</keyword>
<keyword id="KW-0863">Zinc-finger</keyword>